<reference key="1">
    <citation type="submission" date="2006-09" db="EMBL/GenBank/DDBJ databases">
        <authorList>
            <consortium name="The Klebsiella pneumonia Genome Sequencing Project"/>
            <person name="McClelland M."/>
            <person name="Sanderson E.K."/>
            <person name="Spieth J."/>
            <person name="Clifton W.S."/>
            <person name="Latreille P."/>
            <person name="Sabo A."/>
            <person name="Pepin K."/>
            <person name="Bhonagiri V."/>
            <person name="Porwollik S."/>
            <person name="Ali J."/>
            <person name="Wilson R.K."/>
        </authorList>
    </citation>
    <scope>NUCLEOTIDE SEQUENCE [LARGE SCALE GENOMIC DNA]</scope>
    <source>
        <strain>ATCC 700721 / MGH 78578</strain>
    </source>
</reference>
<proteinExistence type="inferred from homology"/>
<evidence type="ECO:0000255" key="1">
    <source>
        <dbReference type="HAMAP-Rule" id="MF_00065"/>
    </source>
</evidence>
<dbReference type="EC" id="2.7.1.25" evidence="1"/>
<dbReference type="EMBL" id="CP000647">
    <property type="protein sequence ID" value="ABR78513.1"/>
    <property type="molecule type" value="Genomic_DNA"/>
</dbReference>
<dbReference type="RefSeq" id="WP_002915158.1">
    <property type="nucleotide sequence ID" value="NC_009648.1"/>
</dbReference>
<dbReference type="SMR" id="A6TD42"/>
<dbReference type="STRING" id="272620.KPN_03112"/>
<dbReference type="jPOST" id="A6TD42"/>
<dbReference type="PaxDb" id="272620-KPN_03112"/>
<dbReference type="EnsemblBacteria" id="ABR78513">
    <property type="protein sequence ID" value="ABR78513"/>
    <property type="gene ID" value="KPN_03112"/>
</dbReference>
<dbReference type="GeneID" id="93271592"/>
<dbReference type="KEGG" id="kpn:KPN_03112"/>
<dbReference type="HOGENOM" id="CLU_046932_1_0_6"/>
<dbReference type="UniPathway" id="UPA00140">
    <property type="reaction ID" value="UER00205"/>
</dbReference>
<dbReference type="Proteomes" id="UP000000265">
    <property type="component" value="Chromosome"/>
</dbReference>
<dbReference type="GO" id="GO:0004020">
    <property type="term" value="F:adenylylsulfate kinase activity"/>
    <property type="evidence" value="ECO:0007669"/>
    <property type="project" value="UniProtKB-UniRule"/>
</dbReference>
<dbReference type="GO" id="GO:0005524">
    <property type="term" value="F:ATP binding"/>
    <property type="evidence" value="ECO:0007669"/>
    <property type="project" value="UniProtKB-UniRule"/>
</dbReference>
<dbReference type="GO" id="GO:0070814">
    <property type="term" value="P:hydrogen sulfide biosynthetic process"/>
    <property type="evidence" value="ECO:0007669"/>
    <property type="project" value="UniProtKB-UniRule"/>
</dbReference>
<dbReference type="GO" id="GO:0000103">
    <property type="term" value="P:sulfate assimilation"/>
    <property type="evidence" value="ECO:0007669"/>
    <property type="project" value="UniProtKB-UniRule"/>
</dbReference>
<dbReference type="CDD" id="cd02027">
    <property type="entry name" value="APSK"/>
    <property type="match status" value="1"/>
</dbReference>
<dbReference type="FunFam" id="3.40.50.300:FF:000212">
    <property type="entry name" value="Adenylyl-sulfate kinase"/>
    <property type="match status" value="1"/>
</dbReference>
<dbReference type="Gene3D" id="3.40.50.300">
    <property type="entry name" value="P-loop containing nucleotide triphosphate hydrolases"/>
    <property type="match status" value="1"/>
</dbReference>
<dbReference type="HAMAP" id="MF_00065">
    <property type="entry name" value="Adenylyl_sulf_kinase"/>
    <property type="match status" value="1"/>
</dbReference>
<dbReference type="InterPro" id="IPR002891">
    <property type="entry name" value="APS_kinase"/>
</dbReference>
<dbReference type="InterPro" id="IPR027417">
    <property type="entry name" value="P-loop_NTPase"/>
</dbReference>
<dbReference type="NCBIfam" id="TIGR00455">
    <property type="entry name" value="apsK"/>
    <property type="match status" value="1"/>
</dbReference>
<dbReference type="NCBIfam" id="NF003013">
    <property type="entry name" value="PRK03846.1"/>
    <property type="match status" value="1"/>
</dbReference>
<dbReference type="PANTHER" id="PTHR11055:SF63">
    <property type="entry name" value="ADENYLYL-SULFATE KINASE 1, CHLOROPLASTIC"/>
    <property type="match status" value="1"/>
</dbReference>
<dbReference type="PANTHER" id="PTHR11055">
    <property type="entry name" value="BIFUNCTIONAL 3'-PHOSPHOADENOSINE 5'-PHOSPHOSULFATE SYNTHASE"/>
    <property type="match status" value="1"/>
</dbReference>
<dbReference type="Pfam" id="PF01583">
    <property type="entry name" value="APS_kinase"/>
    <property type="match status" value="1"/>
</dbReference>
<dbReference type="SUPFAM" id="SSF52540">
    <property type="entry name" value="P-loop containing nucleoside triphosphate hydrolases"/>
    <property type="match status" value="1"/>
</dbReference>
<name>CYSC_KLEP7</name>
<accession>A6TD42</accession>
<gene>
    <name evidence="1" type="primary">cysC</name>
    <name type="ordered locus">KPN78578_30520</name>
    <name type="ORF">KPN_03112</name>
</gene>
<comment type="function">
    <text evidence="1">Catalyzes the synthesis of activated sulfate.</text>
</comment>
<comment type="catalytic activity">
    <reaction evidence="1">
        <text>adenosine 5'-phosphosulfate + ATP = 3'-phosphoadenylyl sulfate + ADP + H(+)</text>
        <dbReference type="Rhea" id="RHEA:24152"/>
        <dbReference type="ChEBI" id="CHEBI:15378"/>
        <dbReference type="ChEBI" id="CHEBI:30616"/>
        <dbReference type="ChEBI" id="CHEBI:58243"/>
        <dbReference type="ChEBI" id="CHEBI:58339"/>
        <dbReference type="ChEBI" id="CHEBI:456216"/>
        <dbReference type="EC" id="2.7.1.25"/>
    </reaction>
</comment>
<comment type="pathway">
    <text evidence="1">Sulfur metabolism; hydrogen sulfide biosynthesis; sulfite from sulfate: step 2/3.</text>
</comment>
<comment type="similarity">
    <text evidence="1">Belongs to the APS kinase family.</text>
</comment>
<organism>
    <name type="scientific">Klebsiella pneumoniae subsp. pneumoniae (strain ATCC 700721 / MGH 78578)</name>
    <dbReference type="NCBI Taxonomy" id="272620"/>
    <lineage>
        <taxon>Bacteria</taxon>
        <taxon>Pseudomonadati</taxon>
        <taxon>Pseudomonadota</taxon>
        <taxon>Gammaproteobacteria</taxon>
        <taxon>Enterobacterales</taxon>
        <taxon>Enterobacteriaceae</taxon>
        <taxon>Klebsiella/Raoultella group</taxon>
        <taxon>Klebsiella</taxon>
        <taxon>Klebsiella pneumoniae complex</taxon>
    </lineage>
</organism>
<protein>
    <recommendedName>
        <fullName evidence="1">Adenylyl-sulfate kinase</fullName>
        <ecNumber evidence="1">2.7.1.25</ecNumber>
    </recommendedName>
    <alternativeName>
        <fullName evidence="1">APS kinase</fullName>
    </alternativeName>
    <alternativeName>
        <fullName evidence="1">ATP adenosine-5'-phosphosulfate 3'-phosphotransferase</fullName>
    </alternativeName>
    <alternativeName>
        <fullName evidence="1">Adenosine-5'-phosphosulfate kinase</fullName>
    </alternativeName>
</protein>
<keyword id="KW-0067">ATP-binding</keyword>
<keyword id="KW-0418">Kinase</keyword>
<keyword id="KW-0547">Nucleotide-binding</keyword>
<keyword id="KW-0597">Phosphoprotein</keyword>
<keyword id="KW-0808">Transferase</keyword>
<sequence length="201" mass="22504">MAQHDENVVWHAHPVTQQQREQHHGHRGVVLWFTGLSGSGKSTVAGALEEALHERGVSTYLLDGDNVRHGLCSDLGFSDEDRKENIRRVGEVARLMVDAGLVVLTAFISPHRAERQMVRERLGEGRFIEVFVDTPLAICEARDPKGLYKKARAGELRNFTGIDSVYEAPEKAEIHLDGEQLVTNLVHQLLDLLQQSDIIRS</sequence>
<feature type="chain" id="PRO_1000009014" description="Adenylyl-sulfate kinase">
    <location>
        <begin position="1"/>
        <end position="201"/>
    </location>
</feature>
<feature type="active site" description="Phosphoserine intermediate" evidence="1">
    <location>
        <position position="109"/>
    </location>
</feature>
<feature type="binding site" evidence="1">
    <location>
        <begin position="35"/>
        <end position="42"/>
    </location>
    <ligand>
        <name>ATP</name>
        <dbReference type="ChEBI" id="CHEBI:30616"/>
    </ligand>
</feature>